<comment type="similarity">
    <text evidence="1">Belongs to the bacterial ribosomal protein bL35 family.</text>
</comment>
<keyword id="KW-1185">Reference proteome</keyword>
<keyword id="KW-0687">Ribonucleoprotein</keyword>
<keyword id="KW-0689">Ribosomal protein</keyword>
<reference key="1">
    <citation type="submission" date="2006-10" db="EMBL/GenBank/DDBJ databases">
        <title>Complete sequence of chromosome of Pelobacter propionicus DSM 2379.</title>
        <authorList>
            <consortium name="US DOE Joint Genome Institute"/>
            <person name="Copeland A."/>
            <person name="Lucas S."/>
            <person name="Lapidus A."/>
            <person name="Barry K."/>
            <person name="Detter J.C."/>
            <person name="Glavina del Rio T."/>
            <person name="Hammon N."/>
            <person name="Israni S."/>
            <person name="Dalin E."/>
            <person name="Tice H."/>
            <person name="Pitluck S."/>
            <person name="Saunders E."/>
            <person name="Brettin T."/>
            <person name="Bruce D."/>
            <person name="Han C."/>
            <person name="Tapia R."/>
            <person name="Schmutz J."/>
            <person name="Larimer F."/>
            <person name="Land M."/>
            <person name="Hauser L."/>
            <person name="Kyrpides N."/>
            <person name="Kim E."/>
            <person name="Lovley D."/>
            <person name="Richardson P."/>
        </authorList>
    </citation>
    <scope>NUCLEOTIDE SEQUENCE [LARGE SCALE GENOMIC DNA]</scope>
    <source>
        <strain>DSM 2379 / NBRC 103807 / OttBd1</strain>
    </source>
</reference>
<proteinExistence type="inferred from homology"/>
<organism>
    <name type="scientific">Pelobacter propionicus (strain DSM 2379 / NBRC 103807 / OttBd1)</name>
    <dbReference type="NCBI Taxonomy" id="338966"/>
    <lineage>
        <taxon>Bacteria</taxon>
        <taxon>Pseudomonadati</taxon>
        <taxon>Thermodesulfobacteriota</taxon>
        <taxon>Desulfuromonadia</taxon>
        <taxon>Desulfuromonadales</taxon>
        <taxon>Desulfuromonadaceae</taxon>
        <taxon>Pelobacter</taxon>
    </lineage>
</organism>
<name>RL35_PELPD</name>
<feature type="chain" id="PRO_1000050736" description="Large ribosomal subunit protein bL35">
    <location>
        <begin position="1"/>
        <end position="65"/>
    </location>
</feature>
<feature type="region of interest" description="Disordered" evidence="2">
    <location>
        <begin position="1"/>
        <end position="51"/>
    </location>
</feature>
<feature type="compositionally biased region" description="Basic residues" evidence="2">
    <location>
        <begin position="10"/>
        <end position="24"/>
    </location>
</feature>
<feature type="compositionally biased region" description="Basic residues" evidence="2">
    <location>
        <begin position="33"/>
        <end position="44"/>
    </location>
</feature>
<accession>A1ARE3</accession>
<sequence length="65" mass="7453">MPKIKTNRGAAKRFRKSASGRVKRGNAFTSHILTHKTRKNKRNLRGTSMVSDVDQKNISRLIPYK</sequence>
<gene>
    <name evidence="1" type="primary">rpmI</name>
    <name type="ordered locus">Ppro_2306</name>
</gene>
<evidence type="ECO:0000255" key="1">
    <source>
        <dbReference type="HAMAP-Rule" id="MF_00514"/>
    </source>
</evidence>
<evidence type="ECO:0000256" key="2">
    <source>
        <dbReference type="SAM" id="MobiDB-lite"/>
    </source>
</evidence>
<evidence type="ECO:0000305" key="3"/>
<protein>
    <recommendedName>
        <fullName evidence="1">Large ribosomal subunit protein bL35</fullName>
    </recommendedName>
    <alternativeName>
        <fullName evidence="3">50S ribosomal protein L35</fullName>
    </alternativeName>
</protein>
<dbReference type="EMBL" id="CP000482">
    <property type="protein sequence ID" value="ABK99913.1"/>
    <property type="molecule type" value="Genomic_DNA"/>
</dbReference>
<dbReference type="RefSeq" id="WP_011736169.1">
    <property type="nucleotide sequence ID" value="NC_008609.1"/>
</dbReference>
<dbReference type="SMR" id="A1ARE3"/>
<dbReference type="STRING" id="338966.Ppro_2306"/>
<dbReference type="KEGG" id="ppd:Ppro_2306"/>
<dbReference type="eggNOG" id="COG0291">
    <property type="taxonomic scope" value="Bacteria"/>
</dbReference>
<dbReference type="HOGENOM" id="CLU_169643_4_3_7"/>
<dbReference type="OrthoDB" id="9804851at2"/>
<dbReference type="Proteomes" id="UP000006732">
    <property type="component" value="Chromosome"/>
</dbReference>
<dbReference type="GO" id="GO:0022625">
    <property type="term" value="C:cytosolic large ribosomal subunit"/>
    <property type="evidence" value="ECO:0007669"/>
    <property type="project" value="TreeGrafter"/>
</dbReference>
<dbReference type="GO" id="GO:0003735">
    <property type="term" value="F:structural constituent of ribosome"/>
    <property type="evidence" value="ECO:0007669"/>
    <property type="project" value="InterPro"/>
</dbReference>
<dbReference type="GO" id="GO:0006412">
    <property type="term" value="P:translation"/>
    <property type="evidence" value="ECO:0007669"/>
    <property type="project" value="UniProtKB-UniRule"/>
</dbReference>
<dbReference type="FunFam" id="4.10.410.60:FF:000001">
    <property type="entry name" value="50S ribosomal protein L35"/>
    <property type="match status" value="1"/>
</dbReference>
<dbReference type="Gene3D" id="4.10.410.60">
    <property type="match status" value="1"/>
</dbReference>
<dbReference type="HAMAP" id="MF_00514">
    <property type="entry name" value="Ribosomal_bL35"/>
    <property type="match status" value="1"/>
</dbReference>
<dbReference type="InterPro" id="IPR001706">
    <property type="entry name" value="Ribosomal_bL35"/>
</dbReference>
<dbReference type="InterPro" id="IPR021137">
    <property type="entry name" value="Ribosomal_bL35-like"/>
</dbReference>
<dbReference type="InterPro" id="IPR018265">
    <property type="entry name" value="Ribosomal_bL35_CS"/>
</dbReference>
<dbReference type="InterPro" id="IPR037229">
    <property type="entry name" value="Ribosomal_bL35_sf"/>
</dbReference>
<dbReference type="NCBIfam" id="TIGR00001">
    <property type="entry name" value="rpmI_bact"/>
    <property type="match status" value="1"/>
</dbReference>
<dbReference type="PANTHER" id="PTHR33343">
    <property type="entry name" value="54S RIBOSOMAL PROTEIN BL35M"/>
    <property type="match status" value="1"/>
</dbReference>
<dbReference type="PANTHER" id="PTHR33343:SF1">
    <property type="entry name" value="LARGE RIBOSOMAL SUBUNIT PROTEIN BL35M"/>
    <property type="match status" value="1"/>
</dbReference>
<dbReference type="Pfam" id="PF01632">
    <property type="entry name" value="Ribosomal_L35p"/>
    <property type="match status" value="1"/>
</dbReference>
<dbReference type="PRINTS" id="PR00064">
    <property type="entry name" value="RIBOSOMALL35"/>
</dbReference>
<dbReference type="SUPFAM" id="SSF143034">
    <property type="entry name" value="L35p-like"/>
    <property type="match status" value="1"/>
</dbReference>
<dbReference type="PROSITE" id="PS00936">
    <property type="entry name" value="RIBOSOMAL_L35"/>
    <property type="match status" value="1"/>
</dbReference>